<feature type="chain" id="PRO_0000076047" description="C-terminal-binding protein 2">
    <location>
        <begin position="1"/>
        <end position="437"/>
    </location>
</feature>
<feature type="region of interest" description="Disordered" evidence="2">
    <location>
        <begin position="410"/>
        <end position="437"/>
    </location>
</feature>
<feature type="compositionally biased region" description="Polar residues" evidence="2">
    <location>
        <begin position="415"/>
        <end position="426"/>
    </location>
</feature>
<feature type="compositionally biased region" description="Basic and acidic residues" evidence="2">
    <location>
        <begin position="427"/>
        <end position="437"/>
    </location>
</feature>
<feature type="active site" evidence="1">
    <location>
        <position position="269"/>
    </location>
</feature>
<feature type="active site" evidence="1">
    <location>
        <position position="298"/>
    </location>
</feature>
<feature type="active site" description="Proton donor" evidence="1">
    <location>
        <position position="318"/>
    </location>
</feature>
<feature type="binding site" evidence="1">
    <location>
        <position position="103"/>
    </location>
    <ligand>
        <name>NAD(+)</name>
        <dbReference type="ChEBI" id="CHEBI:57540"/>
    </ligand>
</feature>
<feature type="binding site" evidence="1">
    <location>
        <begin position="183"/>
        <end position="188"/>
    </location>
    <ligand>
        <name>NAD(+)</name>
        <dbReference type="ChEBI" id="CHEBI:57540"/>
    </ligand>
</feature>
<feature type="binding site" evidence="1">
    <location>
        <position position="207"/>
    </location>
    <ligand>
        <name>NAD(+)</name>
        <dbReference type="ChEBI" id="CHEBI:57540"/>
    </ligand>
</feature>
<feature type="binding site" evidence="1">
    <location>
        <begin position="240"/>
        <end position="246"/>
    </location>
    <ligand>
        <name>NAD(+)</name>
        <dbReference type="ChEBI" id="CHEBI:57540"/>
    </ligand>
</feature>
<feature type="binding site" evidence="1">
    <location>
        <begin position="267"/>
        <end position="269"/>
    </location>
    <ligand>
        <name>NAD(+)</name>
        <dbReference type="ChEBI" id="CHEBI:57540"/>
    </ligand>
</feature>
<feature type="binding site" evidence="1">
    <location>
        <position position="293"/>
    </location>
    <ligand>
        <name>NAD(+)</name>
        <dbReference type="ChEBI" id="CHEBI:57540"/>
    </ligand>
</feature>
<feature type="binding site" evidence="1">
    <location>
        <begin position="318"/>
        <end position="321"/>
    </location>
    <ligand>
        <name>NAD(+)</name>
        <dbReference type="ChEBI" id="CHEBI:57540"/>
    </ligand>
</feature>
<evidence type="ECO:0000250" key="1"/>
<evidence type="ECO:0000256" key="2">
    <source>
        <dbReference type="SAM" id="MobiDB-lite"/>
    </source>
</evidence>
<evidence type="ECO:0000269" key="3">
    <source>
    </source>
</evidence>
<evidence type="ECO:0000305" key="4"/>
<organism>
    <name type="scientific">Xenopus laevis</name>
    <name type="common">African clawed frog</name>
    <dbReference type="NCBI Taxonomy" id="8355"/>
    <lineage>
        <taxon>Eukaryota</taxon>
        <taxon>Metazoa</taxon>
        <taxon>Chordata</taxon>
        <taxon>Craniata</taxon>
        <taxon>Vertebrata</taxon>
        <taxon>Euteleostomi</taxon>
        <taxon>Amphibia</taxon>
        <taxon>Batrachia</taxon>
        <taxon>Anura</taxon>
        <taxon>Pipoidea</taxon>
        <taxon>Pipidae</taxon>
        <taxon>Xenopodinae</taxon>
        <taxon>Xenopus</taxon>
        <taxon>Xenopus</taxon>
    </lineage>
</organism>
<accession>Q9W758</accession>
<accession>Q6DFD9</accession>
<protein>
    <recommendedName>
        <fullName>C-terminal-binding protein 2</fullName>
        <shortName>CtBP2</shortName>
    </recommendedName>
    <alternativeName>
        <fullName>C-terminal-binding protein B</fullName>
    </alternativeName>
    <alternativeName>
        <fullName>TCF-3 corepressor CtBP</fullName>
    </alternativeName>
    <alternativeName>
        <fullName>XCtBP</fullName>
    </alternativeName>
</protein>
<sequence>MDKHKVKRQRLDRICDGIRPPILNGPMPVRPLVALLDGRDCTIEMPILKDVATVAFCDAQSTQEIHEKVLSEAVGALMYHTITLSREDLEKFKALRIIIKIGSGYDNIDIKSAAELGIAVCNIPSASVEETADSTLCHILNLYRRVTWLHQAMREGNRPASVEQIREVAGGAARIRGETLGIIGLGRIGQAVALRAKAFNFTVIFYDPYLADGVERSLGLQRMATLQELLMHSDCITLHCNLNEHNHHLINDFTIKQMRQGCFLVNTARGGLVDEKALAQALKDGRIRGAALDVHESEPFSFSQGPLKDAPNLICTPHTAWYSEHASIEAREEAAKEIRRAIAGPIPDSLRNCVNKDYLLAAVQWSGMEQAAVHPELNGASSYRFPPGVVGVTSAGHPSAIEGLVASSHPLIPSVSHTPSPGQTTKPDPDREIPTDQ</sequence>
<reference key="1">
    <citation type="journal article" date="1999" name="Development">
        <title>XCtBP is a XTcf-3 co-repressor with roles throughout Xenopus development.</title>
        <authorList>
            <person name="Brannon M."/>
            <person name="Brown J.D."/>
            <person name="Bates R."/>
            <person name="Kimelman D."/>
            <person name="Moon R.T."/>
        </authorList>
    </citation>
    <scope>NUCLEOTIDE SEQUENCE [MRNA]</scope>
    <scope>FUNCTION</scope>
    <scope>INTERACTION WITH TCF7L1-A</scope>
    <scope>DEVELOPMENTAL STAGE</scope>
</reference>
<reference key="2">
    <citation type="submission" date="2004-07" db="EMBL/GenBank/DDBJ databases">
        <authorList>
            <consortium name="NIH - Xenopus Gene Collection (XGC) project"/>
        </authorList>
    </citation>
    <scope>NUCLEOTIDE SEQUENCE [LARGE SCALE MRNA]</scope>
    <source>
        <tissue>Oocyte</tissue>
    </source>
</reference>
<gene>
    <name type="primary">ctbp2</name>
    <name type="synonym">ctbp-b</name>
</gene>
<keyword id="KW-0539">Nucleus</keyword>
<keyword id="KW-0560">Oxidoreductase</keyword>
<keyword id="KW-1185">Reference proteome</keyword>
<keyword id="KW-0678">Repressor</keyword>
<keyword id="KW-0804">Transcription</keyword>
<keyword id="KW-0805">Transcription regulation</keyword>
<keyword id="KW-0879">Wnt signaling pathway</keyword>
<name>CTBP2_XENLA</name>
<dbReference type="EMBL" id="AF152006">
    <property type="protein sequence ID" value="AAD41370.1"/>
    <property type="molecule type" value="mRNA"/>
</dbReference>
<dbReference type="EMBL" id="BC076800">
    <property type="protein sequence ID" value="AAH76800.1"/>
    <property type="molecule type" value="mRNA"/>
</dbReference>
<dbReference type="RefSeq" id="NP_001081966.1">
    <property type="nucleotide sequence ID" value="NM_001088497.1"/>
</dbReference>
<dbReference type="RefSeq" id="XP_018109637.1">
    <property type="nucleotide sequence ID" value="XM_018254148.1"/>
</dbReference>
<dbReference type="SMR" id="Q9W758"/>
<dbReference type="DNASU" id="398147"/>
<dbReference type="GeneID" id="398147"/>
<dbReference type="KEGG" id="xla:398147"/>
<dbReference type="AGR" id="Xenbase:XB-GENE-6251928"/>
<dbReference type="CTD" id="398147"/>
<dbReference type="Xenbase" id="XB-GENE-6251928">
    <property type="gene designation" value="ctbp2l.S"/>
</dbReference>
<dbReference type="OrthoDB" id="9991913at2759"/>
<dbReference type="Proteomes" id="UP000186698">
    <property type="component" value="Chromosome 3S"/>
</dbReference>
<dbReference type="GO" id="GO:0005634">
    <property type="term" value="C:nucleus"/>
    <property type="evidence" value="ECO:0000250"/>
    <property type="project" value="UniProtKB"/>
</dbReference>
<dbReference type="GO" id="GO:0140297">
    <property type="term" value="F:DNA-binding transcription factor binding"/>
    <property type="evidence" value="ECO:0000318"/>
    <property type="project" value="GO_Central"/>
</dbReference>
<dbReference type="GO" id="GO:0051287">
    <property type="term" value="F:NAD binding"/>
    <property type="evidence" value="ECO:0007669"/>
    <property type="project" value="InterPro"/>
</dbReference>
<dbReference type="GO" id="GO:0016616">
    <property type="term" value="F:oxidoreductase activity, acting on the CH-OH group of donors, NAD or NADP as acceptor"/>
    <property type="evidence" value="ECO:0007669"/>
    <property type="project" value="InterPro"/>
</dbReference>
<dbReference type="GO" id="GO:0003713">
    <property type="term" value="F:transcription coactivator activity"/>
    <property type="evidence" value="ECO:0000318"/>
    <property type="project" value="GO_Central"/>
</dbReference>
<dbReference type="GO" id="GO:0001221">
    <property type="term" value="F:transcription coregulator binding"/>
    <property type="evidence" value="ECO:0000318"/>
    <property type="project" value="GO_Central"/>
</dbReference>
<dbReference type="GO" id="GO:0003714">
    <property type="term" value="F:transcription corepressor activity"/>
    <property type="evidence" value="ECO:0000318"/>
    <property type="project" value="GO_Central"/>
</dbReference>
<dbReference type="GO" id="GO:0045892">
    <property type="term" value="P:negative regulation of DNA-templated transcription"/>
    <property type="evidence" value="ECO:0000250"/>
    <property type="project" value="UniProtKB"/>
</dbReference>
<dbReference type="GO" id="GO:0006357">
    <property type="term" value="P:regulation of transcription by RNA polymerase II"/>
    <property type="evidence" value="ECO:0000318"/>
    <property type="project" value="GO_Central"/>
</dbReference>
<dbReference type="GO" id="GO:0050872">
    <property type="term" value="P:white fat cell differentiation"/>
    <property type="evidence" value="ECO:0000250"/>
    <property type="project" value="UniProtKB"/>
</dbReference>
<dbReference type="GO" id="GO:0016055">
    <property type="term" value="P:Wnt signaling pathway"/>
    <property type="evidence" value="ECO:0007669"/>
    <property type="project" value="UniProtKB-KW"/>
</dbReference>
<dbReference type="CDD" id="cd05299">
    <property type="entry name" value="CtBP_dh"/>
    <property type="match status" value="1"/>
</dbReference>
<dbReference type="FunFam" id="3.40.50.720:FF:000012">
    <property type="entry name" value="C-terminal-binding protein 2 isoform 1"/>
    <property type="match status" value="1"/>
</dbReference>
<dbReference type="Gene3D" id="3.40.50.720">
    <property type="entry name" value="NAD(P)-binding Rossmann-like Domain"/>
    <property type="match status" value="2"/>
</dbReference>
<dbReference type="InterPro" id="IPR043322">
    <property type="entry name" value="CtBP"/>
</dbReference>
<dbReference type="InterPro" id="IPR051638">
    <property type="entry name" value="CTBP_dehydrogenase"/>
</dbReference>
<dbReference type="InterPro" id="IPR006139">
    <property type="entry name" value="D-isomer_2_OHA_DH_cat_dom"/>
</dbReference>
<dbReference type="InterPro" id="IPR029753">
    <property type="entry name" value="D-isomer_DH_CS"/>
</dbReference>
<dbReference type="InterPro" id="IPR029752">
    <property type="entry name" value="D-isomer_DH_CS1"/>
</dbReference>
<dbReference type="InterPro" id="IPR006140">
    <property type="entry name" value="D-isomer_DH_NAD-bd"/>
</dbReference>
<dbReference type="InterPro" id="IPR036291">
    <property type="entry name" value="NAD(P)-bd_dom_sf"/>
</dbReference>
<dbReference type="PANTHER" id="PTHR46029:SF1">
    <property type="entry name" value="C-TERMINAL BINDING PROTEIN-LIKE"/>
    <property type="match status" value="1"/>
</dbReference>
<dbReference type="PANTHER" id="PTHR46029">
    <property type="entry name" value="C-TERMINAL-BINDING PROTEIN"/>
    <property type="match status" value="1"/>
</dbReference>
<dbReference type="Pfam" id="PF00389">
    <property type="entry name" value="2-Hacid_dh"/>
    <property type="match status" value="1"/>
</dbReference>
<dbReference type="Pfam" id="PF02826">
    <property type="entry name" value="2-Hacid_dh_C"/>
    <property type="match status" value="1"/>
</dbReference>
<dbReference type="SUPFAM" id="SSF52283">
    <property type="entry name" value="Formate/glycerate dehydrogenase catalytic domain-like"/>
    <property type="match status" value="1"/>
</dbReference>
<dbReference type="SUPFAM" id="SSF51735">
    <property type="entry name" value="NAD(P)-binding Rossmann-fold domains"/>
    <property type="match status" value="1"/>
</dbReference>
<dbReference type="PROSITE" id="PS00065">
    <property type="entry name" value="D_2_HYDROXYACID_DH_1"/>
    <property type="match status" value="1"/>
</dbReference>
<dbReference type="PROSITE" id="PS00671">
    <property type="entry name" value="D_2_HYDROXYACID_DH_3"/>
    <property type="match status" value="1"/>
</dbReference>
<proteinExistence type="evidence at protein level"/>
<comment type="function">
    <text evidence="3">Corepressor targeting diverse transcription regulators.</text>
</comment>
<comment type="subunit">
    <text evidence="3">Interacts with the C-terminus of tcf7l1-a via the consensus motifs P-X-[DNS]-L-[STVA].</text>
</comment>
<comment type="subcellular location">
    <subcellularLocation>
        <location evidence="1">Nucleus</location>
    </subcellularLocation>
</comment>
<comment type="developmental stage">
    <text evidence="3">Expressed throughout development. Localized to discrete structures during neurulation. The pattern of expression is increasingly refined to include the head, central nervous system and tissues along the dorsal midline to the tailbud.</text>
</comment>
<comment type="similarity">
    <text evidence="4">Belongs to the D-isomer specific 2-hydroxyacid dehydrogenase family.</text>
</comment>